<gene>
    <name evidence="1" type="primary">gcvT</name>
    <name type="ordered locus">BAMEG_4484</name>
</gene>
<comment type="function">
    <text evidence="1">The glycine cleavage system catalyzes the degradation of glycine.</text>
</comment>
<comment type="catalytic activity">
    <reaction evidence="1">
        <text>N(6)-[(R)-S(8)-aminomethyldihydrolipoyl]-L-lysyl-[protein] + (6S)-5,6,7,8-tetrahydrofolate = N(6)-[(R)-dihydrolipoyl]-L-lysyl-[protein] + (6R)-5,10-methylene-5,6,7,8-tetrahydrofolate + NH4(+)</text>
        <dbReference type="Rhea" id="RHEA:16945"/>
        <dbReference type="Rhea" id="RHEA-COMP:10475"/>
        <dbReference type="Rhea" id="RHEA-COMP:10492"/>
        <dbReference type="ChEBI" id="CHEBI:15636"/>
        <dbReference type="ChEBI" id="CHEBI:28938"/>
        <dbReference type="ChEBI" id="CHEBI:57453"/>
        <dbReference type="ChEBI" id="CHEBI:83100"/>
        <dbReference type="ChEBI" id="CHEBI:83143"/>
        <dbReference type="EC" id="2.1.2.10"/>
    </reaction>
</comment>
<comment type="subunit">
    <text evidence="1">The glycine cleavage system is composed of four proteins: P, T, L and H.</text>
</comment>
<comment type="similarity">
    <text evidence="1">Belongs to the GcvT family.</text>
</comment>
<keyword id="KW-0032">Aminotransferase</keyword>
<keyword id="KW-0808">Transferase</keyword>
<name>GCST_BACAC</name>
<organism>
    <name type="scientific">Bacillus anthracis (strain CDC 684 / NRRL 3495)</name>
    <dbReference type="NCBI Taxonomy" id="568206"/>
    <lineage>
        <taxon>Bacteria</taxon>
        <taxon>Bacillati</taxon>
        <taxon>Bacillota</taxon>
        <taxon>Bacilli</taxon>
        <taxon>Bacillales</taxon>
        <taxon>Bacillaceae</taxon>
        <taxon>Bacillus</taxon>
        <taxon>Bacillus cereus group</taxon>
    </lineage>
</organism>
<proteinExistence type="inferred from homology"/>
<sequence>MITLQRTPLFDVYAKYGGKTIDFGGWELPVQFSSIKEEHEAVRTAAGLFDVSHMGEVEVKGVDSLAFLQRVVTNDVSTLKVGGAQYTAMCYENGGTVDDLLIYKRGEEDYLLVINASNIEKDYEWLASHVIGDATVVNVSSEVAQLAIQGPKAEGILQKVVSEDLKEIKFFKFKNDILVDGIPALVSRTGYTGEDGFEIYCKSEDAAKLWEKLLEVGAEEGLKACGLGARDTLRFEATLPLYGQELSKDITPIEAGIGFAVKTNKEADFFGKATLKEQKENGAPRKLVGIEVIERGIPRTHYPVFIGEEKIGEVTSGTQSPTLKKSIGLALIDVKYAAVDTEVEIEIRNKRVKAVVVPTPFYKRSK</sequence>
<feature type="chain" id="PRO_1000125630" description="Aminomethyltransferase">
    <location>
        <begin position="1"/>
        <end position="366"/>
    </location>
</feature>
<reference key="1">
    <citation type="submission" date="2008-10" db="EMBL/GenBank/DDBJ databases">
        <title>Genome sequence of Bacillus anthracis str. CDC 684.</title>
        <authorList>
            <person name="Dodson R.J."/>
            <person name="Munk A.C."/>
            <person name="Brettin T."/>
            <person name="Bruce D."/>
            <person name="Detter C."/>
            <person name="Tapia R."/>
            <person name="Han C."/>
            <person name="Sutton G."/>
            <person name="Sims D."/>
        </authorList>
    </citation>
    <scope>NUCLEOTIDE SEQUENCE [LARGE SCALE GENOMIC DNA]</scope>
    <source>
        <strain>CDC 684 / NRRL 3495</strain>
    </source>
</reference>
<evidence type="ECO:0000255" key="1">
    <source>
        <dbReference type="HAMAP-Rule" id="MF_00259"/>
    </source>
</evidence>
<dbReference type="EC" id="2.1.2.10" evidence="1"/>
<dbReference type="EMBL" id="CP001215">
    <property type="protein sequence ID" value="ACP16630.1"/>
    <property type="molecule type" value="Genomic_DNA"/>
</dbReference>
<dbReference type="RefSeq" id="WP_000631769.1">
    <property type="nucleotide sequence ID" value="NC_012581.1"/>
</dbReference>
<dbReference type="SMR" id="C3LKQ4"/>
<dbReference type="GeneID" id="72450912"/>
<dbReference type="KEGG" id="bah:BAMEG_4484"/>
<dbReference type="HOGENOM" id="CLU_007884_10_2_9"/>
<dbReference type="GO" id="GO:0005829">
    <property type="term" value="C:cytosol"/>
    <property type="evidence" value="ECO:0007669"/>
    <property type="project" value="TreeGrafter"/>
</dbReference>
<dbReference type="GO" id="GO:0005960">
    <property type="term" value="C:glycine cleavage complex"/>
    <property type="evidence" value="ECO:0007669"/>
    <property type="project" value="InterPro"/>
</dbReference>
<dbReference type="GO" id="GO:0004047">
    <property type="term" value="F:aminomethyltransferase activity"/>
    <property type="evidence" value="ECO:0007669"/>
    <property type="project" value="UniProtKB-UniRule"/>
</dbReference>
<dbReference type="GO" id="GO:0008483">
    <property type="term" value="F:transaminase activity"/>
    <property type="evidence" value="ECO:0007669"/>
    <property type="project" value="UniProtKB-KW"/>
</dbReference>
<dbReference type="GO" id="GO:0019464">
    <property type="term" value="P:glycine decarboxylation via glycine cleavage system"/>
    <property type="evidence" value="ECO:0007669"/>
    <property type="project" value="UniProtKB-UniRule"/>
</dbReference>
<dbReference type="FunFam" id="2.40.30.110:FF:000003">
    <property type="entry name" value="Aminomethyltransferase"/>
    <property type="match status" value="1"/>
</dbReference>
<dbReference type="FunFam" id="3.30.70.1400:FF:000001">
    <property type="entry name" value="Aminomethyltransferase"/>
    <property type="match status" value="1"/>
</dbReference>
<dbReference type="FunFam" id="4.10.1250.10:FF:000001">
    <property type="entry name" value="Aminomethyltransferase"/>
    <property type="match status" value="1"/>
</dbReference>
<dbReference type="Gene3D" id="2.40.30.110">
    <property type="entry name" value="Aminomethyltransferase beta-barrel domains"/>
    <property type="match status" value="1"/>
</dbReference>
<dbReference type="Gene3D" id="3.30.70.1400">
    <property type="entry name" value="Aminomethyltransferase beta-barrel domains"/>
    <property type="match status" value="1"/>
</dbReference>
<dbReference type="Gene3D" id="4.10.1250.10">
    <property type="entry name" value="Aminomethyltransferase fragment"/>
    <property type="match status" value="1"/>
</dbReference>
<dbReference type="Gene3D" id="3.30.1360.120">
    <property type="entry name" value="Probable tRNA modification gtpase trme, domain 1"/>
    <property type="match status" value="1"/>
</dbReference>
<dbReference type="HAMAP" id="MF_00259">
    <property type="entry name" value="GcvT"/>
    <property type="match status" value="1"/>
</dbReference>
<dbReference type="InterPro" id="IPR006223">
    <property type="entry name" value="GCS_T"/>
</dbReference>
<dbReference type="InterPro" id="IPR022903">
    <property type="entry name" value="GCS_T_bac"/>
</dbReference>
<dbReference type="InterPro" id="IPR013977">
    <property type="entry name" value="GCST_C"/>
</dbReference>
<dbReference type="InterPro" id="IPR006222">
    <property type="entry name" value="GCV_T_N"/>
</dbReference>
<dbReference type="InterPro" id="IPR028896">
    <property type="entry name" value="GcvT/YgfZ/DmdA"/>
</dbReference>
<dbReference type="InterPro" id="IPR029043">
    <property type="entry name" value="GcvT/YgfZ_C"/>
</dbReference>
<dbReference type="InterPro" id="IPR027266">
    <property type="entry name" value="TrmE/GcvT_dom1"/>
</dbReference>
<dbReference type="NCBIfam" id="TIGR00528">
    <property type="entry name" value="gcvT"/>
    <property type="match status" value="1"/>
</dbReference>
<dbReference type="NCBIfam" id="NF001567">
    <property type="entry name" value="PRK00389.1"/>
    <property type="match status" value="1"/>
</dbReference>
<dbReference type="PANTHER" id="PTHR43757">
    <property type="entry name" value="AMINOMETHYLTRANSFERASE"/>
    <property type="match status" value="1"/>
</dbReference>
<dbReference type="PANTHER" id="PTHR43757:SF2">
    <property type="entry name" value="AMINOMETHYLTRANSFERASE, MITOCHONDRIAL"/>
    <property type="match status" value="1"/>
</dbReference>
<dbReference type="Pfam" id="PF01571">
    <property type="entry name" value="GCV_T"/>
    <property type="match status" value="1"/>
</dbReference>
<dbReference type="Pfam" id="PF08669">
    <property type="entry name" value="GCV_T_C"/>
    <property type="match status" value="1"/>
</dbReference>
<dbReference type="PIRSF" id="PIRSF006487">
    <property type="entry name" value="GcvT"/>
    <property type="match status" value="1"/>
</dbReference>
<dbReference type="SUPFAM" id="SSF101790">
    <property type="entry name" value="Aminomethyltransferase beta-barrel domain"/>
    <property type="match status" value="1"/>
</dbReference>
<dbReference type="SUPFAM" id="SSF103025">
    <property type="entry name" value="Folate-binding domain"/>
    <property type="match status" value="1"/>
</dbReference>
<protein>
    <recommendedName>
        <fullName evidence="1">Aminomethyltransferase</fullName>
        <ecNumber evidence="1">2.1.2.10</ecNumber>
    </recommendedName>
    <alternativeName>
        <fullName evidence="1">Glycine cleavage system T protein</fullName>
    </alternativeName>
</protein>
<accession>C3LKQ4</accession>